<dbReference type="EC" id="4.2.1.33" evidence="1"/>
<dbReference type="EMBL" id="AP009351">
    <property type="protein sequence ID" value="BAF68237.1"/>
    <property type="molecule type" value="Genomic_DNA"/>
</dbReference>
<dbReference type="RefSeq" id="WP_000531823.1">
    <property type="nucleotide sequence ID" value="NZ_JBBIAE010000015.1"/>
</dbReference>
<dbReference type="SMR" id="A6QIQ5"/>
<dbReference type="KEGG" id="sae:NWMN_1965"/>
<dbReference type="HOGENOM" id="CLU_006714_3_4_9"/>
<dbReference type="UniPathway" id="UPA00048">
    <property type="reaction ID" value="UER00071"/>
</dbReference>
<dbReference type="Proteomes" id="UP000006386">
    <property type="component" value="Chromosome"/>
</dbReference>
<dbReference type="GO" id="GO:0003861">
    <property type="term" value="F:3-isopropylmalate dehydratase activity"/>
    <property type="evidence" value="ECO:0007669"/>
    <property type="project" value="UniProtKB-UniRule"/>
</dbReference>
<dbReference type="GO" id="GO:0051539">
    <property type="term" value="F:4 iron, 4 sulfur cluster binding"/>
    <property type="evidence" value="ECO:0007669"/>
    <property type="project" value="UniProtKB-KW"/>
</dbReference>
<dbReference type="GO" id="GO:0046872">
    <property type="term" value="F:metal ion binding"/>
    <property type="evidence" value="ECO:0007669"/>
    <property type="project" value="UniProtKB-KW"/>
</dbReference>
<dbReference type="GO" id="GO:0009098">
    <property type="term" value="P:L-leucine biosynthetic process"/>
    <property type="evidence" value="ECO:0007669"/>
    <property type="project" value="UniProtKB-UniRule"/>
</dbReference>
<dbReference type="CDD" id="cd01583">
    <property type="entry name" value="IPMI"/>
    <property type="match status" value="1"/>
</dbReference>
<dbReference type="Gene3D" id="3.30.499.10">
    <property type="entry name" value="Aconitase, domain 3"/>
    <property type="match status" value="2"/>
</dbReference>
<dbReference type="HAMAP" id="MF_01026">
    <property type="entry name" value="LeuC_type1"/>
    <property type="match status" value="1"/>
</dbReference>
<dbReference type="InterPro" id="IPR004430">
    <property type="entry name" value="3-IsopropMal_deHydase_lsu"/>
</dbReference>
<dbReference type="InterPro" id="IPR015931">
    <property type="entry name" value="Acnase/IPM_dHydase_lsu_aba_1/3"/>
</dbReference>
<dbReference type="InterPro" id="IPR001030">
    <property type="entry name" value="Acoase/IPM_deHydtase_lsu_aba"/>
</dbReference>
<dbReference type="InterPro" id="IPR018136">
    <property type="entry name" value="Aconitase_4Fe-4S_BS"/>
</dbReference>
<dbReference type="InterPro" id="IPR036008">
    <property type="entry name" value="Aconitase_4Fe-4S_dom"/>
</dbReference>
<dbReference type="InterPro" id="IPR050067">
    <property type="entry name" value="IPM_dehydratase_rel_enz"/>
</dbReference>
<dbReference type="InterPro" id="IPR033941">
    <property type="entry name" value="IPMI_cat"/>
</dbReference>
<dbReference type="NCBIfam" id="TIGR00170">
    <property type="entry name" value="leuC"/>
    <property type="match status" value="1"/>
</dbReference>
<dbReference type="NCBIfam" id="NF004016">
    <property type="entry name" value="PRK05478.1"/>
    <property type="match status" value="1"/>
</dbReference>
<dbReference type="NCBIfam" id="NF009116">
    <property type="entry name" value="PRK12466.1"/>
    <property type="match status" value="1"/>
</dbReference>
<dbReference type="PANTHER" id="PTHR43822:SF9">
    <property type="entry name" value="3-ISOPROPYLMALATE DEHYDRATASE"/>
    <property type="match status" value="1"/>
</dbReference>
<dbReference type="PANTHER" id="PTHR43822">
    <property type="entry name" value="HOMOACONITASE, MITOCHONDRIAL-RELATED"/>
    <property type="match status" value="1"/>
</dbReference>
<dbReference type="Pfam" id="PF00330">
    <property type="entry name" value="Aconitase"/>
    <property type="match status" value="1"/>
</dbReference>
<dbReference type="PRINTS" id="PR00415">
    <property type="entry name" value="ACONITASE"/>
</dbReference>
<dbReference type="SUPFAM" id="SSF53732">
    <property type="entry name" value="Aconitase iron-sulfur domain"/>
    <property type="match status" value="1"/>
</dbReference>
<dbReference type="PROSITE" id="PS00450">
    <property type="entry name" value="ACONITASE_1"/>
    <property type="match status" value="1"/>
</dbReference>
<dbReference type="PROSITE" id="PS01244">
    <property type="entry name" value="ACONITASE_2"/>
    <property type="match status" value="1"/>
</dbReference>
<name>LEUC_STAAE</name>
<keyword id="KW-0004">4Fe-4S</keyword>
<keyword id="KW-0028">Amino-acid biosynthesis</keyword>
<keyword id="KW-0100">Branched-chain amino acid biosynthesis</keyword>
<keyword id="KW-0408">Iron</keyword>
<keyword id="KW-0411">Iron-sulfur</keyword>
<keyword id="KW-0432">Leucine biosynthesis</keyword>
<keyword id="KW-0456">Lyase</keyword>
<keyword id="KW-0479">Metal-binding</keyword>
<sequence>MGQTLFDKVWNRHVLYGKLGEPQLLYIDLHLIHEVTSPQAFEGLRLQNRKLRRPDLTFATLDHNVPTIDIFNIKDEIANKQITTLQKNAIDFGVHIFDMGSDEQGIVHMVGPETGLTQPGKTIVCGDSHTATHGAFGAIAFGIGTSEVEHVFATQTLWQTKPKNLKIDINGTLPTGVYAKDIILHLIKTYGVDFGTGYALEFTGETIKNLSMDGRMTICNMAIEGGAKYGIIQPDDITFEYVKGRPFADNFAKSVDKWRELYSDDDAIFDRVIELDVSTLEPQVTWGTNPEMGVNFSEPFPEINDINDQRAYDYMGLEPGQKAEDIDLGYVFLGSCTNARLSDLIEASHIVKGNKVHPNITAIVVPGSRTVKKEAEKLGLDTIFKNAGFEWREPGCSMCLGMNPDQVPEGVHCASTSNRNFEGRQGKGARTHLVSPAMAAAAAIHGKFVDVRKVVV</sequence>
<reference key="1">
    <citation type="journal article" date="2008" name="J. Bacteriol.">
        <title>Genome sequence of Staphylococcus aureus strain Newman and comparative analysis of staphylococcal genomes: polymorphism and evolution of two major pathogenicity islands.</title>
        <authorList>
            <person name="Baba T."/>
            <person name="Bae T."/>
            <person name="Schneewind O."/>
            <person name="Takeuchi F."/>
            <person name="Hiramatsu K."/>
        </authorList>
    </citation>
    <scope>NUCLEOTIDE SEQUENCE [LARGE SCALE GENOMIC DNA]</scope>
    <source>
        <strain>Newman</strain>
    </source>
</reference>
<evidence type="ECO:0000255" key="1">
    <source>
        <dbReference type="HAMAP-Rule" id="MF_01026"/>
    </source>
</evidence>
<feature type="chain" id="PRO_1000072948" description="3-isopropylmalate dehydratase large subunit">
    <location>
        <begin position="1"/>
        <end position="456"/>
    </location>
</feature>
<feature type="binding site" evidence="1">
    <location>
        <position position="336"/>
    </location>
    <ligand>
        <name>[4Fe-4S] cluster</name>
        <dbReference type="ChEBI" id="CHEBI:49883"/>
    </ligand>
</feature>
<feature type="binding site" evidence="1">
    <location>
        <position position="396"/>
    </location>
    <ligand>
        <name>[4Fe-4S] cluster</name>
        <dbReference type="ChEBI" id="CHEBI:49883"/>
    </ligand>
</feature>
<feature type="binding site" evidence="1">
    <location>
        <position position="399"/>
    </location>
    <ligand>
        <name>[4Fe-4S] cluster</name>
        <dbReference type="ChEBI" id="CHEBI:49883"/>
    </ligand>
</feature>
<organism>
    <name type="scientific">Staphylococcus aureus (strain Newman)</name>
    <dbReference type="NCBI Taxonomy" id="426430"/>
    <lineage>
        <taxon>Bacteria</taxon>
        <taxon>Bacillati</taxon>
        <taxon>Bacillota</taxon>
        <taxon>Bacilli</taxon>
        <taxon>Bacillales</taxon>
        <taxon>Staphylococcaceae</taxon>
        <taxon>Staphylococcus</taxon>
    </lineage>
</organism>
<accession>A6QIQ5</accession>
<comment type="function">
    <text evidence="1">Catalyzes the isomerization between 2-isopropylmalate and 3-isopropylmalate, via the formation of 2-isopropylmaleate.</text>
</comment>
<comment type="catalytic activity">
    <reaction evidence="1">
        <text>(2R,3S)-3-isopropylmalate = (2S)-2-isopropylmalate</text>
        <dbReference type="Rhea" id="RHEA:32287"/>
        <dbReference type="ChEBI" id="CHEBI:1178"/>
        <dbReference type="ChEBI" id="CHEBI:35121"/>
        <dbReference type="EC" id="4.2.1.33"/>
    </reaction>
</comment>
<comment type="cofactor">
    <cofactor evidence="1">
        <name>[4Fe-4S] cluster</name>
        <dbReference type="ChEBI" id="CHEBI:49883"/>
    </cofactor>
    <text evidence="1">Binds 1 [4Fe-4S] cluster per subunit.</text>
</comment>
<comment type="pathway">
    <text evidence="1">Amino-acid biosynthesis; L-leucine biosynthesis; L-leucine from 3-methyl-2-oxobutanoate: step 2/4.</text>
</comment>
<comment type="subunit">
    <text evidence="1">Heterodimer of LeuC and LeuD.</text>
</comment>
<comment type="similarity">
    <text evidence="1">Belongs to the aconitase/IPM isomerase family. LeuC type 1 subfamily.</text>
</comment>
<protein>
    <recommendedName>
        <fullName evidence="1">3-isopropylmalate dehydratase large subunit</fullName>
        <ecNumber evidence="1">4.2.1.33</ecNumber>
    </recommendedName>
    <alternativeName>
        <fullName evidence="1">Alpha-IPM isomerase</fullName>
        <shortName evidence="1">IPMI</shortName>
    </alternativeName>
    <alternativeName>
        <fullName evidence="1">Isopropylmalate isomerase</fullName>
    </alternativeName>
</protein>
<proteinExistence type="inferred from homology"/>
<gene>
    <name evidence="1" type="primary">leuC</name>
    <name type="ordered locus">NWMN_1965</name>
</gene>